<accession>P79860</accession>
<comment type="function">
    <text evidence="1">Intercellular signal essential for a variety of patterning events during development.</text>
</comment>
<comment type="subcellular location">
    <subcellularLocation>
        <location evidence="1">Cell membrane</location>
    </subcellularLocation>
    <subcellularLocation>
        <location evidence="1">Secreted</location>
        <location evidence="1">Extracellular space</location>
    </subcellularLocation>
    <text evidence="1">Indian hedgehog protein N-product: Cell membrane; Lipid-anchor; Extracellular side. The N-terminal peptide remains associated with the cell surface. Indian hedgehog protein C-product: Secreted, extracellular space. The C-terminal peptide diffuses from the cell.</text>
</comment>
<comment type="domain">
    <text evidence="1">The indian hedgehog protein N-product binds calcium and zinc ions; this stabilizes the protein fold and is essential for protein-protein interactions mediated by this domain.</text>
</comment>
<comment type="PTM">
    <text evidence="1">The C-terminal domain displays an autoproteolysis activity and a cholesterol transferase activity. Both activities result in the cleavage of the full-length protein and covalent attachment of a cholesterol moiety to the C-terminal of the newly generated N-terminal fragment (N-product). The N-product is the active species in both local and long-range signaling, whereas the C-product has no signaling activity (By similarity).</text>
</comment>
<comment type="PTM">
    <text evidence="1">Cholesterylation is required for N-product targeting to lipid rafts and multimerization.</text>
</comment>
<comment type="PTM">
    <text evidence="1">N-palmitoylation is required for N-product multimerization and full activity.</text>
</comment>
<comment type="similarity">
    <text evidence="3">Belongs to the hedgehog family.</text>
</comment>
<dbReference type="EMBL" id="U51385">
    <property type="protein sequence ID" value="AAB38609.1"/>
    <property type="molecule type" value="Genomic_DNA"/>
</dbReference>
<dbReference type="SMR" id="P79860"/>
<dbReference type="GO" id="GO:0005615">
    <property type="term" value="C:extracellular space"/>
    <property type="evidence" value="ECO:0007669"/>
    <property type="project" value="TreeGrafter"/>
</dbReference>
<dbReference type="GO" id="GO:0005886">
    <property type="term" value="C:plasma membrane"/>
    <property type="evidence" value="ECO:0007669"/>
    <property type="project" value="UniProtKB-SubCell"/>
</dbReference>
<dbReference type="GO" id="GO:0005509">
    <property type="term" value="F:calcium ion binding"/>
    <property type="evidence" value="ECO:0007669"/>
    <property type="project" value="TreeGrafter"/>
</dbReference>
<dbReference type="GO" id="GO:0005113">
    <property type="term" value="F:patched binding"/>
    <property type="evidence" value="ECO:0007669"/>
    <property type="project" value="TreeGrafter"/>
</dbReference>
<dbReference type="GO" id="GO:0008233">
    <property type="term" value="F:peptidase activity"/>
    <property type="evidence" value="ECO:0007669"/>
    <property type="project" value="UniProtKB-KW"/>
</dbReference>
<dbReference type="GO" id="GO:0001708">
    <property type="term" value="P:cell fate specification"/>
    <property type="evidence" value="ECO:0007669"/>
    <property type="project" value="TreeGrafter"/>
</dbReference>
<dbReference type="GO" id="GO:0007267">
    <property type="term" value="P:cell-cell signaling"/>
    <property type="evidence" value="ECO:0007669"/>
    <property type="project" value="InterPro"/>
</dbReference>
<dbReference type="GO" id="GO:0006508">
    <property type="term" value="P:proteolysis"/>
    <property type="evidence" value="ECO:0007669"/>
    <property type="project" value="UniProtKB-KW"/>
</dbReference>
<dbReference type="GO" id="GO:0010468">
    <property type="term" value="P:regulation of gene expression"/>
    <property type="evidence" value="ECO:0007669"/>
    <property type="project" value="TreeGrafter"/>
</dbReference>
<dbReference type="GO" id="GO:0007224">
    <property type="term" value="P:smoothened signaling pathway"/>
    <property type="evidence" value="ECO:0007669"/>
    <property type="project" value="TreeGrafter"/>
</dbReference>
<dbReference type="Gene3D" id="3.30.1380.10">
    <property type="match status" value="1"/>
</dbReference>
<dbReference type="InterPro" id="IPR001657">
    <property type="entry name" value="Hedgehog"/>
</dbReference>
<dbReference type="InterPro" id="IPR009045">
    <property type="entry name" value="Hedgehog_sig/DD-Pept_Zn-bd_sf"/>
</dbReference>
<dbReference type="InterPro" id="IPR050387">
    <property type="entry name" value="Hedgehog_Signaling"/>
</dbReference>
<dbReference type="InterPro" id="IPR000320">
    <property type="entry name" value="Hedgehog_signalling_dom"/>
</dbReference>
<dbReference type="PANTHER" id="PTHR11889">
    <property type="entry name" value="HEDGEHOG"/>
    <property type="match status" value="1"/>
</dbReference>
<dbReference type="PANTHER" id="PTHR11889:SF39">
    <property type="entry name" value="INDIAN HEDGEHOG PROTEIN"/>
    <property type="match status" value="1"/>
</dbReference>
<dbReference type="Pfam" id="PF01085">
    <property type="entry name" value="HH_signal"/>
    <property type="match status" value="1"/>
</dbReference>
<dbReference type="PRINTS" id="PR00632">
    <property type="entry name" value="SONICHHOG"/>
</dbReference>
<dbReference type="SUPFAM" id="SSF55166">
    <property type="entry name" value="Hedgehog/DD-peptidase"/>
    <property type="match status" value="1"/>
</dbReference>
<organism>
    <name type="scientific">Rasbora elegans</name>
    <name type="common">Elegant rasbora</name>
    <dbReference type="NCBI Taxonomy" id="27712"/>
    <lineage>
        <taxon>Eukaryota</taxon>
        <taxon>Metazoa</taxon>
        <taxon>Chordata</taxon>
        <taxon>Craniata</taxon>
        <taxon>Vertebrata</taxon>
        <taxon>Euteleostomi</taxon>
        <taxon>Actinopterygii</taxon>
        <taxon>Neopterygii</taxon>
        <taxon>Teleostei</taxon>
        <taxon>Ostariophysi</taxon>
        <taxon>Cypriniformes</taxon>
        <taxon>Danionidae</taxon>
        <taxon>Rasborinae</taxon>
        <taxon>Rasbora</taxon>
    </lineage>
</organism>
<reference key="1">
    <citation type="journal article" date="1996" name="Proc. Natl. Acad. Sci. U.S.A.">
        <title>Evolutionary analyses of hedgehog and Hoxd-10 genes in fish species closely related to the zebrafish.</title>
        <authorList>
            <person name="Zardoya R."/>
            <person name="Abouheif E."/>
            <person name="Meyer A."/>
        </authorList>
    </citation>
    <scope>NUCLEOTIDE SEQUENCE [GENOMIC DNA]</scope>
    <source>
        <tissue>Muscle</tissue>
    </source>
</reference>
<name>IHH_RASEL</name>
<protein>
    <recommendedName>
        <fullName>Indian hedgehog protein</fullName>
        <shortName>IHH</shortName>
    </recommendedName>
</protein>
<evidence type="ECO:0000250" key="1"/>
<evidence type="ECO:0000250" key="2">
    <source>
        <dbReference type="UniProtKB" id="Q14623"/>
    </source>
</evidence>
<evidence type="ECO:0000305" key="3"/>
<feature type="chain" id="PRO_0000058747" description="Indian hedgehog protein">
    <location>
        <begin position="1" status="less than"/>
        <end position="58" status="greater than"/>
    </location>
</feature>
<feature type="binding site" evidence="2">
    <location>
        <position position="13"/>
    </location>
    <ligand>
        <name>Ca(2+)</name>
        <dbReference type="ChEBI" id="CHEBI:29108"/>
        <label>1</label>
    </ligand>
</feature>
<feature type="binding site" evidence="2">
    <location>
        <position position="14"/>
    </location>
    <ligand>
        <name>Ca(2+)</name>
        <dbReference type="ChEBI" id="CHEBI:29108"/>
        <label>1</label>
    </ligand>
</feature>
<feature type="binding site" evidence="2">
    <location>
        <position position="14"/>
    </location>
    <ligand>
        <name>Ca(2+)</name>
        <dbReference type="ChEBI" id="CHEBI:29108"/>
        <label>2</label>
    </ligand>
</feature>
<feature type="binding site" evidence="2">
    <location>
        <position position="17"/>
    </location>
    <ligand>
        <name>Ca(2+)</name>
        <dbReference type="ChEBI" id="CHEBI:29108"/>
        <label>2</label>
    </ligand>
</feature>
<feature type="binding site" evidence="2">
    <location>
        <position position="19"/>
    </location>
    <ligand>
        <name>Ca(2+)</name>
        <dbReference type="ChEBI" id="CHEBI:29108"/>
        <label>2</label>
    </ligand>
</feature>
<feature type="binding site" evidence="2">
    <location>
        <position position="28"/>
    </location>
    <ligand>
        <name>Zn(2+)</name>
        <dbReference type="ChEBI" id="CHEBI:29105"/>
    </ligand>
</feature>
<feature type="binding site" evidence="2">
    <location>
        <position position="35"/>
    </location>
    <ligand>
        <name>Zn(2+)</name>
        <dbReference type="ChEBI" id="CHEBI:29105"/>
    </ligand>
</feature>
<feature type="non-terminal residue">
    <location>
        <position position="1"/>
    </location>
</feature>
<feature type="non-terminal residue">
    <location>
        <position position="58"/>
    </location>
</feature>
<gene>
    <name type="primary">ihh</name>
</gene>
<sequence>VMNLWPGVRLRVTEGWDEDGHHSEESLHYEGRAVDITTSDRDRNKYAMLARLAVEAGF</sequence>
<keyword id="KW-0068">Autocatalytic cleavage</keyword>
<keyword id="KW-0106">Calcium</keyword>
<keyword id="KW-1003">Cell membrane</keyword>
<keyword id="KW-0217">Developmental protein</keyword>
<keyword id="KW-0378">Hydrolase</keyword>
<keyword id="KW-0449">Lipoprotein</keyword>
<keyword id="KW-0472">Membrane</keyword>
<keyword id="KW-0479">Metal-binding</keyword>
<keyword id="KW-0564">Palmitate</keyword>
<keyword id="KW-0645">Protease</keyword>
<keyword id="KW-0964">Secreted</keyword>
<keyword id="KW-0862">Zinc</keyword>
<proteinExistence type="inferred from homology"/>